<dbReference type="EMBL" id="AP006878">
    <property type="protein sequence ID" value="BAD85643.1"/>
    <property type="molecule type" value="Genomic_DNA"/>
</dbReference>
<dbReference type="RefSeq" id="WP_011250405.1">
    <property type="nucleotide sequence ID" value="NC_006624.1"/>
</dbReference>
<dbReference type="PDB" id="6SKF">
    <property type="method" value="EM"/>
    <property type="resolution" value="2.95 A"/>
    <property type="chains" value="BP=1-194"/>
</dbReference>
<dbReference type="PDB" id="6SKG">
    <property type="method" value="EM"/>
    <property type="resolution" value="2.65 A"/>
    <property type="chains" value="BP=1-194"/>
</dbReference>
<dbReference type="PDB" id="6TH6">
    <property type="method" value="EM"/>
    <property type="resolution" value="2.55 A"/>
    <property type="chains" value="BP=1-194"/>
</dbReference>
<dbReference type="PDBsum" id="6SKF"/>
<dbReference type="PDBsum" id="6SKG"/>
<dbReference type="PDBsum" id="6TH6"/>
<dbReference type="EMDB" id="EMD-10223"/>
<dbReference type="EMDB" id="EMD-10224"/>
<dbReference type="EMDB" id="EMD-10503"/>
<dbReference type="SMR" id="Q5JH43"/>
<dbReference type="FunCoup" id="Q5JH43">
    <property type="interactions" value="157"/>
</dbReference>
<dbReference type="STRING" id="69014.TK1454"/>
<dbReference type="EnsemblBacteria" id="BAD85643">
    <property type="protein sequence ID" value="BAD85643"/>
    <property type="gene ID" value="TK1454"/>
</dbReference>
<dbReference type="GeneID" id="78447977"/>
<dbReference type="KEGG" id="tko:TK1454"/>
<dbReference type="PATRIC" id="fig|69014.16.peg.1416"/>
<dbReference type="eggNOG" id="arCOG04209">
    <property type="taxonomic scope" value="Archaea"/>
</dbReference>
<dbReference type="HOGENOM" id="CLU_080796_1_0_2"/>
<dbReference type="InParanoid" id="Q5JH43"/>
<dbReference type="OrthoDB" id="8183at2157"/>
<dbReference type="PhylomeDB" id="Q5JH43"/>
<dbReference type="Proteomes" id="UP000000536">
    <property type="component" value="Chromosome"/>
</dbReference>
<dbReference type="GO" id="GO:0022625">
    <property type="term" value="C:cytosolic large ribosomal subunit"/>
    <property type="evidence" value="ECO:0000318"/>
    <property type="project" value="GO_Central"/>
</dbReference>
<dbReference type="GO" id="GO:0003723">
    <property type="term" value="F:RNA binding"/>
    <property type="evidence" value="ECO:0000318"/>
    <property type="project" value="GO_Central"/>
</dbReference>
<dbReference type="GO" id="GO:0003735">
    <property type="term" value="F:structural constituent of ribosome"/>
    <property type="evidence" value="ECO:0000318"/>
    <property type="project" value="GO_Central"/>
</dbReference>
<dbReference type="GO" id="GO:0002181">
    <property type="term" value="P:cytoplasmic translation"/>
    <property type="evidence" value="ECO:0000318"/>
    <property type="project" value="GO_Central"/>
</dbReference>
<dbReference type="FunFam" id="3.40.1120.10:FF:000002">
    <property type="entry name" value="50S ribosomal protein L15e"/>
    <property type="match status" value="1"/>
</dbReference>
<dbReference type="Gene3D" id="3.40.1120.10">
    <property type="entry name" value="Ribosomal protein l15e"/>
    <property type="match status" value="1"/>
</dbReference>
<dbReference type="HAMAP" id="MF_00256">
    <property type="entry name" value="Ribosomal_eL15"/>
    <property type="match status" value="1"/>
</dbReference>
<dbReference type="InterPro" id="IPR024794">
    <property type="entry name" value="Rbsml_eL15_core_dom_sf"/>
</dbReference>
<dbReference type="InterPro" id="IPR000439">
    <property type="entry name" value="Ribosomal_eL15"/>
</dbReference>
<dbReference type="InterPro" id="IPR020926">
    <property type="entry name" value="Ribosomal_eL15_arc"/>
</dbReference>
<dbReference type="InterPro" id="IPR020925">
    <property type="entry name" value="Ribosomal_eL15_CS"/>
</dbReference>
<dbReference type="InterPro" id="IPR012678">
    <property type="entry name" value="Ribosomal_uL23/eL15/eS24_sf"/>
</dbReference>
<dbReference type="NCBIfam" id="NF003269">
    <property type="entry name" value="PRK04243.1"/>
    <property type="match status" value="1"/>
</dbReference>
<dbReference type="PANTHER" id="PTHR11847:SF4">
    <property type="entry name" value="LARGE RIBOSOMAL SUBUNIT PROTEIN EL15"/>
    <property type="match status" value="1"/>
</dbReference>
<dbReference type="PANTHER" id="PTHR11847">
    <property type="entry name" value="RIBOSOMAL PROTEIN L15"/>
    <property type="match status" value="1"/>
</dbReference>
<dbReference type="Pfam" id="PF00827">
    <property type="entry name" value="Ribosomal_L15e"/>
    <property type="match status" value="1"/>
</dbReference>
<dbReference type="SMART" id="SM01384">
    <property type="entry name" value="Ribosomal_L15e"/>
    <property type="match status" value="1"/>
</dbReference>
<dbReference type="SUPFAM" id="SSF54189">
    <property type="entry name" value="Ribosomal proteins S24e, L23 and L15e"/>
    <property type="match status" value="1"/>
</dbReference>
<dbReference type="PROSITE" id="PS01194">
    <property type="entry name" value="RIBOSOMAL_L15E"/>
    <property type="match status" value="1"/>
</dbReference>
<evidence type="ECO:0000255" key="1">
    <source>
        <dbReference type="HAMAP-Rule" id="MF_00256"/>
    </source>
</evidence>
<evidence type="ECO:0000256" key="2">
    <source>
        <dbReference type="SAM" id="MobiDB-lite"/>
    </source>
</evidence>
<evidence type="ECO:0000269" key="3">
    <source>
    </source>
</evidence>
<evidence type="ECO:0000305" key="4"/>
<evidence type="ECO:0007744" key="5">
    <source>
        <dbReference type="PDB" id="6SKF"/>
    </source>
</evidence>
<evidence type="ECO:0007744" key="6">
    <source>
        <dbReference type="PDB" id="6SKG"/>
    </source>
</evidence>
<evidence type="ECO:0007744" key="7">
    <source>
        <dbReference type="PDB" id="6TH6"/>
    </source>
</evidence>
<feature type="chain" id="PRO_0000127584" description="Large ribosomal subunit protein eL15">
    <location>
        <begin position="1"/>
        <end position="194"/>
    </location>
</feature>
<feature type="region of interest" description="Disordered" evidence="2">
    <location>
        <begin position="168"/>
        <end position="194"/>
    </location>
</feature>
<feature type="compositionally biased region" description="Basic residues" evidence="2">
    <location>
        <begin position="184"/>
        <end position="194"/>
    </location>
</feature>
<proteinExistence type="evidence at protein level"/>
<sequence length="194" mass="22552">MGMYKYIREAWKSPKKSYVGELLKKRMIQWRRDPVVKRIERPTRLDRARSLGYQAKQGYVVVRVRVRRGGRKRPRWKGGRKPSKMGMVKYSPKKSLQWIAEEKAARKFPNLEVLNSYWVGEDGMYKWFEVIMVDPHHPVIKSDPKIAWIAGKAHKGRVFRGLTSAGKRSRGLLNKGKGAEKVRPSIRAHQGKGK</sequence>
<name>RL15E_THEKO</name>
<keyword id="KW-0002">3D-structure</keyword>
<keyword id="KW-1185">Reference proteome</keyword>
<keyword id="KW-0687">Ribonucleoprotein</keyword>
<keyword id="KW-0689">Ribosomal protein</keyword>
<gene>
    <name evidence="1" type="primary">rpl15e</name>
    <name type="ordered locus">TK1454</name>
</gene>
<comment type="subunit">
    <text evidence="3">Part of the 50S ribosomal subunit.</text>
</comment>
<comment type="similarity">
    <text evidence="1">Belongs to the eukaryotic ribosomal protein eL15 family.</text>
</comment>
<organism>
    <name type="scientific">Thermococcus kodakarensis (strain ATCC BAA-918 / JCM 12380 / KOD1)</name>
    <name type="common">Pyrococcus kodakaraensis (strain KOD1)</name>
    <dbReference type="NCBI Taxonomy" id="69014"/>
    <lineage>
        <taxon>Archaea</taxon>
        <taxon>Methanobacteriati</taxon>
        <taxon>Methanobacteriota</taxon>
        <taxon>Thermococci</taxon>
        <taxon>Thermococcales</taxon>
        <taxon>Thermococcaceae</taxon>
        <taxon>Thermococcus</taxon>
    </lineage>
</organism>
<reference key="1">
    <citation type="journal article" date="2005" name="Genome Res.">
        <title>Complete genome sequence of the hyperthermophilic archaeon Thermococcus kodakaraensis KOD1 and comparison with Pyrococcus genomes.</title>
        <authorList>
            <person name="Fukui T."/>
            <person name="Atomi H."/>
            <person name="Kanai T."/>
            <person name="Matsumi R."/>
            <person name="Fujiwara S."/>
            <person name="Imanaka T."/>
        </authorList>
    </citation>
    <scope>NUCLEOTIDE SEQUENCE [LARGE SCALE GENOMIC DNA]</scope>
    <source>
        <strain>ATCC BAA-918 / JCM 12380 / KOD1</strain>
    </source>
</reference>
<reference evidence="5 6 7" key="2">
    <citation type="journal article" date="2020" name="Nature">
        <title>Dynamic RNA acetylation revealed by quantitative cross-evolutionary mapping.</title>
        <authorList>
            <person name="Sas-Chen A."/>
            <person name="Thomas J.M."/>
            <person name="Matzov D."/>
            <person name="Taoka M."/>
            <person name="Nance K.D."/>
            <person name="Nir R."/>
            <person name="Bryson K.M."/>
            <person name="Shachar R."/>
            <person name="Liman G.L.S."/>
            <person name="Burkhart B.W."/>
            <person name="Gamage S.T."/>
            <person name="Nobe Y."/>
            <person name="Briney C.A."/>
            <person name="Levy M.J."/>
            <person name="Fuchs R.T."/>
            <person name="Robb G.B."/>
            <person name="Hartmann J."/>
            <person name="Sharma S."/>
            <person name="Lin Q."/>
            <person name="Florens L."/>
            <person name="Washburn M.P."/>
            <person name="Isobe T."/>
            <person name="Santangelo T.J."/>
            <person name="Shalev-Benami M."/>
            <person name="Meier J.L."/>
            <person name="Schwartz S."/>
        </authorList>
    </citation>
    <scope>STRUCTURE BY ELECTRON MICROSCOPY (2.55 ANGSTROMS) IN 70S RIBOSOME</scope>
    <scope>SUBUNIT</scope>
    <source>
        <strain>ATCC BAA-918 / TS559</strain>
    </source>
</reference>
<protein>
    <recommendedName>
        <fullName evidence="1">Large ribosomal subunit protein eL15</fullName>
    </recommendedName>
    <alternativeName>
        <fullName evidence="4">50S ribosomal protein L15e</fullName>
    </alternativeName>
</protein>
<accession>Q5JH43</accession>